<accession>Q54S43</accession>
<feature type="chain" id="PRO_0000327489" description="FACT complex subunit SPT16">
    <location>
        <begin position="1"/>
        <end position="1072"/>
    </location>
</feature>
<feature type="region of interest" description="Disordered" evidence="3">
    <location>
        <begin position="1"/>
        <end position="21"/>
    </location>
</feature>
<feature type="region of interest" description="Disordered" evidence="3">
    <location>
        <begin position="946"/>
        <end position="1072"/>
    </location>
</feature>
<feature type="coiled-coil region" evidence="2">
    <location>
        <begin position="486"/>
        <end position="522"/>
    </location>
</feature>
<feature type="compositionally biased region" description="Low complexity" evidence="3">
    <location>
        <begin position="1"/>
        <end position="12"/>
    </location>
</feature>
<feature type="compositionally biased region" description="Acidic residues" evidence="3">
    <location>
        <begin position="946"/>
        <end position="956"/>
    </location>
</feature>
<feature type="compositionally biased region" description="Low complexity" evidence="3">
    <location>
        <begin position="969"/>
        <end position="978"/>
    </location>
</feature>
<feature type="compositionally biased region" description="Acidic residues" evidence="3">
    <location>
        <begin position="979"/>
        <end position="994"/>
    </location>
</feature>
<feature type="compositionally biased region" description="Basic and acidic residues" evidence="3">
    <location>
        <begin position="995"/>
        <end position="1020"/>
    </location>
</feature>
<feature type="compositionally biased region" description="Low complexity" evidence="3">
    <location>
        <begin position="1021"/>
        <end position="1035"/>
    </location>
</feature>
<feature type="compositionally biased region" description="Gly residues" evidence="3">
    <location>
        <begin position="1036"/>
        <end position="1046"/>
    </location>
</feature>
<feature type="compositionally biased region" description="Low complexity" evidence="3">
    <location>
        <begin position="1047"/>
        <end position="1072"/>
    </location>
</feature>
<protein>
    <recommendedName>
        <fullName>FACT complex subunit SPT16</fullName>
    </recommendedName>
    <alternativeName>
        <fullName>Facilitates chromatin transcription complex subunit SPT16</fullName>
    </alternativeName>
</protein>
<evidence type="ECO:0000250" key="1"/>
<evidence type="ECO:0000255" key="2"/>
<evidence type="ECO:0000256" key="3">
    <source>
        <dbReference type="SAM" id="MobiDB-lite"/>
    </source>
</evidence>
<evidence type="ECO:0000305" key="4"/>
<dbReference type="EMBL" id="AAFI02000047">
    <property type="protein sequence ID" value="EAL66198.1"/>
    <property type="molecule type" value="Genomic_DNA"/>
</dbReference>
<dbReference type="RefSeq" id="XP_640196.1">
    <property type="nucleotide sequence ID" value="XM_635104.1"/>
</dbReference>
<dbReference type="SMR" id="Q54S43"/>
<dbReference type="FunCoup" id="Q54S43">
    <property type="interactions" value="1064"/>
</dbReference>
<dbReference type="STRING" id="44689.Q54S43"/>
<dbReference type="PaxDb" id="44689-DDB0231753"/>
<dbReference type="EnsemblProtists" id="EAL66198">
    <property type="protein sequence ID" value="EAL66198"/>
    <property type="gene ID" value="DDB_G0282677"/>
</dbReference>
<dbReference type="GeneID" id="8623736"/>
<dbReference type="KEGG" id="ddi:DDB_G0282677"/>
<dbReference type="dictyBase" id="DDB_G0282677">
    <property type="gene designation" value="spt16"/>
</dbReference>
<dbReference type="VEuPathDB" id="AmoebaDB:DDB_G0282677"/>
<dbReference type="eggNOG" id="KOG1189">
    <property type="taxonomic scope" value="Eukaryota"/>
</dbReference>
<dbReference type="HOGENOM" id="CLU_004627_1_0_1"/>
<dbReference type="InParanoid" id="Q54S43"/>
<dbReference type="OMA" id="YHINTIP"/>
<dbReference type="PhylomeDB" id="Q54S43"/>
<dbReference type="Reactome" id="R-DDI-674695">
    <property type="pathway name" value="RNA Polymerase II Pre-transcription Events"/>
</dbReference>
<dbReference type="Reactome" id="R-DDI-6796648">
    <property type="pathway name" value="TP53 Regulates Transcription of DNA Repair Genes"/>
</dbReference>
<dbReference type="Reactome" id="R-DDI-6804756">
    <property type="pathway name" value="Regulation of TP53 Activity through Phosphorylation"/>
</dbReference>
<dbReference type="PRO" id="PR:Q54S43"/>
<dbReference type="Proteomes" id="UP000002195">
    <property type="component" value="Chromosome 3"/>
</dbReference>
<dbReference type="GO" id="GO:0035101">
    <property type="term" value="C:FACT complex"/>
    <property type="evidence" value="ECO:0000250"/>
    <property type="project" value="dictyBase"/>
</dbReference>
<dbReference type="GO" id="GO:0031491">
    <property type="term" value="F:nucleosome binding"/>
    <property type="evidence" value="ECO:0000318"/>
    <property type="project" value="GO_Central"/>
</dbReference>
<dbReference type="GO" id="GO:0006281">
    <property type="term" value="P:DNA repair"/>
    <property type="evidence" value="ECO:0007669"/>
    <property type="project" value="UniProtKB-KW"/>
</dbReference>
<dbReference type="GO" id="GO:0006260">
    <property type="term" value="P:DNA replication"/>
    <property type="evidence" value="ECO:0007669"/>
    <property type="project" value="UniProtKB-KW"/>
</dbReference>
<dbReference type="GO" id="GO:1902275">
    <property type="term" value="P:regulation of chromatin organization"/>
    <property type="evidence" value="ECO:0000250"/>
    <property type="project" value="dictyBase"/>
</dbReference>
<dbReference type="GO" id="GO:0006368">
    <property type="term" value="P:transcription elongation by RNA polymerase II"/>
    <property type="evidence" value="ECO:0000318"/>
    <property type="project" value="GO_Central"/>
</dbReference>
<dbReference type="CDD" id="cd01091">
    <property type="entry name" value="CDC68-like"/>
    <property type="match status" value="1"/>
</dbReference>
<dbReference type="FunFam" id="2.30.29.30:FF:000017">
    <property type="entry name" value="FACT complex subunit SPT16"/>
    <property type="match status" value="1"/>
</dbReference>
<dbReference type="FunFam" id="3.40.350.10:FF:000006">
    <property type="entry name" value="FACT complex subunit SPT16"/>
    <property type="match status" value="1"/>
</dbReference>
<dbReference type="FunFam" id="3.90.230.10:FF:000005">
    <property type="entry name" value="FACT complex subunit spt16"/>
    <property type="match status" value="1"/>
</dbReference>
<dbReference type="FunFam" id="2.30.29.210:FF:000004">
    <property type="entry name" value="Transcription factor-like protein"/>
    <property type="match status" value="1"/>
</dbReference>
<dbReference type="Gene3D" id="2.30.29.150">
    <property type="match status" value="1"/>
</dbReference>
<dbReference type="Gene3D" id="3.90.230.10">
    <property type="entry name" value="Creatinase/methionine aminopeptidase superfamily"/>
    <property type="match status" value="1"/>
</dbReference>
<dbReference type="Gene3D" id="3.40.350.10">
    <property type="entry name" value="Creatinase/prolidase N-terminal domain"/>
    <property type="match status" value="1"/>
</dbReference>
<dbReference type="Gene3D" id="2.30.29.210">
    <property type="entry name" value="FACT complex subunit Spt16p/Cdc68p"/>
    <property type="match status" value="1"/>
</dbReference>
<dbReference type="Gene3D" id="2.30.29.30">
    <property type="entry name" value="Pleckstrin-homology domain (PH domain)/Phosphotyrosine-binding domain (PTB)"/>
    <property type="match status" value="1"/>
</dbReference>
<dbReference type="InterPro" id="IPR029149">
    <property type="entry name" value="Creatin/AminoP/Spt16_N"/>
</dbReference>
<dbReference type="InterPro" id="IPR036005">
    <property type="entry name" value="Creatinase/aminopeptidase-like"/>
</dbReference>
<dbReference type="InterPro" id="IPR029148">
    <property type="entry name" value="FACT-SPT16_Nlobe"/>
</dbReference>
<dbReference type="InterPro" id="IPR056595">
    <property type="entry name" value="Fact-SPT16_PH"/>
</dbReference>
<dbReference type="InterPro" id="IPR013953">
    <property type="entry name" value="FACT_SPT16_M"/>
</dbReference>
<dbReference type="InterPro" id="IPR000994">
    <property type="entry name" value="Pept_M24"/>
</dbReference>
<dbReference type="InterPro" id="IPR011993">
    <property type="entry name" value="PH-like_dom_sf"/>
</dbReference>
<dbReference type="InterPro" id="IPR013719">
    <property type="entry name" value="RTT106/SPT16-like_middle_dom"/>
</dbReference>
<dbReference type="InterPro" id="IPR040258">
    <property type="entry name" value="Spt16"/>
</dbReference>
<dbReference type="InterPro" id="IPR033825">
    <property type="entry name" value="Spt16_M24"/>
</dbReference>
<dbReference type="PANTHER" id="PTHR13980">
    <property type="entry name" value="CDC68 RELATED"/>
    <property type="match status" value="1"/>
</dbReference>
<dbReference type="PANTHER" id="PTHR13980:SF15">
    <property type="entry name" value="FACT COMPLEX SUBUNIT SPT16"/>
    <property type="match status" value="1"/>
</dbReference>
<dbReference type="Pfam" id="PF14826">
    <property type="entry name" value="FACT-Spt16_Nlob"/>
    <property type="match status" value="1"/>
</dbReference>
<dbReference type="Pfam" id="PF00557">
    <property type="entry name" value="Peptidase_M24"/>
    <property type="match status" value="1"/>
</dbReference>
<dbReference type="Pfam" id="PF24824">
    <property type="entry name" value="PH_SPT16"/>
    <property type="match status" value="1"/>
</dbReference>
<dbReference type="Pfam" id="PF08512">
    <property type="entry name" value="Rttp106-like_middle"/>
    <property type="match status" value="1"/>
</dbReference>
<dbReference type="Pfam" id="PF08644">
    <property type="entry name" value="SPT16"/>
    <property type="match status" value="1"/>
</dbReference>
<dbReference type="SMART" id="SM01285">
    <property type="entry name" value="FACT-Spt16_Nlob"/>
    <property type="match status" value="1"/>
</dbReference>
<dbReference type="SMART" id="SM01287">
    <property type="entry name" value="Rtt106"/>
    <property type="match status" value="1"/>
</dbReference>
<dbReference type="SMART" id="SM01286">
    <property type="entry name" value="SPT16"/>
    <property type="match status" value="1"/>
</dbReference>
<dbReference type="SUPFAM" id="SSF55920">
    <property type="entry name" value="Creatinase/aminopeptidase"/>
    <property type="match status" value="1"/>
</dbReference>
<proteinExistence type="inferred from homology"/>
<gene>
    <name type="primary">spt16</name>
    <name type="ORF">DDB_G0282677</name>
</gene>
<comment type="function">
    <text evidence="1">Component of the FACT complex, a general chromatin factor that acts to reorganize nucleosomes. The FACT complex is involved in multiple processes that require DNA as a template such as mRNA elongation, DNA replication and DNA repair. During transcription elongation the FACT complex acts as a histone chaperone that both destabilizes and restores nucleosomal structure. It facilitates the passage of RNA polymerase II and transcription by promoting the dissociation of one histone H2A-H2B dimer from the nucleosome, then subsequently promotes the reestablishment of the nucleosome following the passage of RNA polymerase II (By similarity).</text>
</comment>
<comment type="subunit">
    <text evidence="1">Forms a stable heterodimer with ssrp1. The spt16-ssrp1 dimer associates with a HMG box DNA-binding domain protein, probably nhp6, to form the FACT complex (By similarity).</text>
</comment>
<comment type="subcellular location">
    <subcellularLocation>
        <location evidence="1">Nucleus</location>
    </subcellularLocation>
    <subcellularLocation>
        <location evidence="1">Chromosome</location>
    </subcellularLocation>
</comment>
<comment type="similarity">
    <text evidence="4">Belongs to the peptidase M24 family. SPT16 subfamily.</text>
</comment>
<comment type="caution">
    <text evidence="4">Although related to the peptidase M24 family, this protein lacks conserved active site residues suggesting that it may lack peptidase activity.</text>
</comment>
<name>SPT16_DICDI</name>
<reference key="1">
    <citation type="journal article" date="2005" name="Nature">
        <title>The genome of the social amoeba Dictyostelium discoideum.</title>
        <authorList>
            <person name="Eichinger L."/>
            <person name="Pachebat J.A."/>
            <person name="Gloeckner G."/>
            <person name="Rajandream M.A."/>
            <person name="Sucgang R."/>
            <person name="Berriman M."/>
            <person name="Song J."/>
            <person name="Olsen R."/>
            <person name="Szafranski K."/>
            <person name="Xu Q."/>
            <person name="Tunggal B."/>
            <person name="Kummerfeld S."/>
            <person name="Madera M."/>
            <person name="Konfortov B.A."/>
            <person name="Rivero F."/>
            <person name="Bankier A.T."/>
            <person name="Lehmann R."/>
            <person name="Hamlin N."/>
            <person name="Davies R."/>
            <person name="Gaudet P."/>
            <person name="Fey P."/>
            <person name="Pilcher K."/>
            <person name="Chen G."/>
            <person name="Saunders D."/>
            <person name="Sodergren E.J."/>
            <person name="Davis P."/>
            <person name="Kerhornou A."/>
            <person name="Nie X."/>
            <person name="Hall N."/>
            <person name="Anjard C."/>
            <person name="Hemphill L."/>
            <person name="Bason N."/>
            <person name="Farbrother P."/>
            <person name="Desany B."/>
            <person name="Just E."/>
            <person name="Morio T."/>
            <person name="Rost R."/>
            <person name="Churcher C.M."/>
            <person name="Cooper J."/>
            <person name="Haydock S."/>
            <person name="van Driessche N."/>
            <person name="Cronin A."/>
            <person name="Goodhead I."/>
            <person name="Muzny D.M."/>
            <person name="Mourier T."/>
            <person name="Pain A."/>
            <person name="Lu M."/>
            <person name="Harper D."/>
            <person name="Lindsay R."/>
            <person name="Hauser H."/>
            <person name="James K.D."/>
            <person name="Quiles M."/>
            <person name="Madan Babu M."/>
            <person name="Saito T."/>
            <person name="Buchrieser C."/>
            <person name="Wardroper A."/>
            <person name="Felder M."/>
            <person name="Thangavelu M."/>
            <person name="Johnson D."/>
            <person name="Knights A."/>
            <person name="Loulseged H."/>
            <person name="Mungall K.L."/>
            <person name="Oliver K."/>
            <person name="Price C."/>
            <person name="Quail M.A."/>
            <person name="Urushihara H."/>
            <person name="Hernandez J."/>
            <person name="Rabbinowitsch E."/>
            <person name="Steffen D."/>
            <person name="Sanders M."/>
            <person name="Ma J."/>
            <person name="Kohara Y."/>
            <person name="Sharp S."/>
            <person name="Simmonds M.N."/>
            <person name="Spiegler S."/>
            <person name="Tivey A."/>
            <person name="Sugano S."/>
            <person name="White B."/>
            <person name="Walker D."/>
            <person name="Woodward J.R."/>
            <person name="Winckler T."/>
            <person name="Tanaka Y."/>
            <person name="Shaulsky G."/>
            <person name="Schleicher M."/>
            <person name="Weinstock G.M."/>
            <person name="Rosenthal A."/>
            <person name="Cox E.C."/>
            <person name="Chisholm R.L."/>
            <person name="Gibbs R.A."/>
            <person name="Loomis W.F."/>
            <person name="Platzer M."/>
            <person name="Kay R.R."/>
            <person name="Williams J.G."/>
            <person name="Dear P.H."/>
            <person name="Noegel A.A."/>
            <person name="Barrell B.G."/>
            <person name="Kuspa A."/>
        </authorList>
    </citation>
    <scope>NUCLEOTIDE SEQUENCE [LARGE SCALE GENOMIC DNA]</scope>
    <source>
        <strain>AX4</strain>
    </source>
</reference>
<keyword id="KW-0158">Chromosome</keyword>
<keyword id="KW-0175">Coiled coil</keyword>
<keyword id="KW-0227">DNA damage</keyword>
<keyword id="KW-0234">DNA repair</keyword>
<keyword id="KW-0235">DNA replication</keyword>
<keyword id="KW-0539">Nucleus</keyword>
<keyword id="KW-1185">Reference proteome</keyword>
<keyword id="KW-0804">Transcription</keyword>
<keyword id="KW-0805">Transcription regulation</keyword>
<sequence>MSQSTTTTTTTTAAPAVPTGPREATLDAGNFCKRVKILYDSWNSDSNLWKSANSLVLALGQPNESNPYQKVTSLQTWLFGYELKDTIIVFLEKEIYIVSTSKKINLFQKLSETEQVKTELSSIKFNFLTIDKSDKNKSNFEKLIGEATKAGSNIGVIIKETYIGDLALQWEAALNECPLTKVDITPALSSCLLVKDLQEQKNIITSAKITSKVLKSHILPKIETIIDKGERQTHNQLADYAADIFESPEKISSKLTVEHVDYSYVPIIQSGGIYDLRASASSDDNPLHFGTIIVSCGARYKNYCSNIARTYIIDPTSDQKKNYAILLNVQSNVIKAIKPDVTFSSLYEKAIQTIKESSKPELVDHFPKNVGYGIGIEFQESLAVLNATNSRTLKAGMTLNIACGFQKISNPEGKDEKSKTYSLLISDTVLLNDEGKVEVLTDVGKKASDVVYMLGGEDDDDDNDNDPSVKLELPDDVKGITGRTIETKEKSKSVEERRRDHQKMLEQKNLQEAENKIKAMTDPNGKKGTPEVDYTAITKLQPIYSSVGAYPQDIVKNKMYIDPKKETVLFPIFGYMVPFHISTIKNISKSEEYIRVNFNTPTSYTQEQIDAGFVPPQLMYIREVTYKVNDPKVLANNIRLIKELKKKFTTRETEDREKRNLITQEKLILLRGKFPRLPEVHARPTLSGARRTIGILEAHENGIRFNPTSTKDRTPIDVLYKNIKHAIYQQADQESMAVIHFHLHDALMIGKKKTKDVQFYIEISEMSQSLDVSSRFNDEEEEERRERALKEKINNDFKTFIKRVEEIAPEPGLEFDVPYRELGFYGVPNVSTVFIQPSVHCLLSILEPPFFVLTLDDVEIACFERAIRSLKNFDLSFVFKDYNRPPIRISVIPRNYFETVKEWLDSFNIKFYQSERNYNWKRIMDTIKSDVKKFHDDGGWSFLDLEEEEEEEDSGDDDYHSNSDESESSDYISSMSSGSDDDDEDSSEGENWEDLEQKAERDDKMKTFDETNKRKRDEKSVSSSNRPSSSKSGSSSSGGGGGGGGSSRSKSSSSSSKGSSSSSSKSSSSKRK</sequence>
<organism>
    <name type="scientific">Dictyostelium discoideum</name>
    <name type="common">Social amoeba</name>
    <dbReference type="NCBI Taxonomy" id="44689"/>
    <lineage>
        <taxon>Eukaryota</taxon>
        <taxon>Amoebozoa</taxon>
        <taxon>Evosea</taxon>
        <taxon>Eumycetozoa</taxon>
        <taxon>Dictyostelia</taxon>
        <taxon>Dictyosteliales</taxon>
        <taxon>Dictyosteliaceae</taxon>
        <taxon>Dictyostelium</taxon>
    </lineage>
</organism>